<dbReference type="EC" id="1.1.1.37" evidence="1"/>
<dbReference type="EMBL" id="FM954972">
    <property type="protein sequence ID" value="CAV17367.1"/>
    <property type="molecule type" value="Genomic_DNA"/>
</dbReference>
<dbReference type="SMR" id="B7VID0"/>
<dbReference type="STRING" id="575788.VS_0358"/>
<dbReference type="KEGG" id="vsp:VS_0358"/>
<dbReference type="eggNOG" id="COG0039">
    <property type="taxonomic scope" value="Bacteria"/>
</dbReference>
<dbReference type="HOGENOM" id="CLU_047181_0_1_6"/>
<dbReference type="Proteomes" id="UP000009100">
    <property type="component" value="Chromosome 1"/>
</dbReference>
<dbReference type="GO" id="GO:0005737">
    <property type="term" value="C:cytoplasm"/>
    <property type="evidence" value="ECO:0007669"/>
    <property type="project" value="TreeGrafter"/>
</dbReference>
<dbReference type="GO" id="GO:0030060">
    <property type="term" value="F:L-malate dehydrogenase (NAD+) activity"/>
    <property type="evidence" value="ECO:0007669"/>
    <property type="project" value="UniProtKB-UniRule"/>
</dbReference>
<dbReference type="GO" id="GO:0006108">
    <property type="term" value="P:malate metabolic process"/>
    <property type="evidence" value="ECO:0007669"/>
    <property type="project" value="InterPro"/>
</dbReference>
<dbReference type="GO" id="GO:0006099">
    <property type="term" value="P:tricarboxylic acid cycle"/>
    <property type="evidence" value="ECO:0007669"/>
    <property type="project" value="UniProtKB-UniRule"/>
</dbReference>
<dbReference type="CDD" id="cd01337">
    <property type="entry name" value="MDH_glyoxysomal_mitochondrial"/>
    <property type="match status" value="1"/>
</dbReference>
<dbReference type="FunFam" id="3.40.50.720:FF:000017">
    <property type="entry name" value="Malate dehydrogenase"/>
    <property type="match status" value="1"/>
</dbReference>
<dbReference type="FunFam" id="3.90.110.10:FF:000001">
    <property type="entry name" value="Malate dehydrogenase"/>
    <property type="match status" value="1"/>
</dbReference>
<dbReference type="Gene3D" id="3.90.110.10">
    <property type="entry name" value="Lactate dehydrogenase/glycoside hydrolase, family 4, C-terminal"/>
    <property type="match status" value="1"/>
</dbReference>
<dbReference type="Gene3D" id="3.40.50.720">
    <property type="entry name" value="NAD(P)-binding Rossmann-like Domain"/>
    <property type="match status" value="1"/>
</dbReference>
<dbReference type="HAMAP" id="MF_01516">
    <property type="entry name" value="Malate_dehydrog_1"/>
    <property type="match status" value="1"/>
</dbReference>
<dbReference type="InterPro" id="IPR001557">
    <property type="entry name" value="L-lactate/malate_DH"/>
</dbReference>
<dbReference type="InterPro" id="IPR022383">
    <property type="entry name" value="Lactate/malate_DH_C"/>
</dbReference>
<dbReference type="InterPro" id="IPR001236">
    <property type="entry name" value="Lactate/malate_DH_N"/>
</dbReference>
<dbReference type="InterPro" id="IPR015955">
    <property type="entry name" value="Lactate_DH/Glyco_Ohase_4_C"/>
</dbReference>
<dbReference type="InterPro" id="IPR001252">
    <property type="entry name" value="Malate_DH_AS"/>
</dbReference>
<dbReference type="InterPro" id="IPR010097">
    <property type="entry name" value="Malate_DH_type1"/>
</dbReference>
<dbReference type="InterPro" id="IPR023958">
    <property type="entry name" value="Malate_DH_type1_bac"/>
</dbReference>
<dbReference type="InterPro" id="IPR036291">
    <property type="entry name" value="NAD(P)-bd_dom_sf"/>
</dbReference>
<dbReference type="NCBIfam" id="TIGR01772">
    <property type="entry name" value="MDH_euk_gproteo"/>
    <property type="match status" value="1"/>
</dbReference>
<dbReference type="PANTHER" id="PTHR11540">
    <property type="entry name" value="MALATE AND LACTATE DEHYDROGENASE"/>
    <property type="match status" value="1"/>
</dbReference>
<dbReference type="PANTHER" id="PTHR11540:SF16">
    <property type="entry name" value="MALATE DEHYDROGENASE, MITOCHONDRIAL"/>
    <property type="match status" value="1"/>
</dbReference>
<dbReference type="Pfam" id="PF02866">
    <property type="entry name" value="Ldh_1_C"/>
    <property type="match status" value="1"/>
</dbReference>
<dbReference type="Pfam" id="PF00056">
    <property type="entry name" value="Ldh_1_N"/>
    <property type="match status" value="1"/>
</dbReference>
<dbReference type="PIRSF" id="PIRSF000102">
    <property type="entry name" value="Lac_mal_DH"/>
    <property type="match status" value="1"/>
</dbReference>
<dbReference type="SUPFAM" id="SSF56327">
    <property type="entry name" value="LDH C-terminal domain-like"/>
    <property type="match status" value="1"/>
</dbReference>
<dbReference type="SUPFAM" id="SSF51735">
    <property type="entry name" value="NAD(P)-binding Rossmann-fold domains"/>
    <property type="match status" value="1"/>
</dbReference>
<dbReference type="PROSITE" id="PS00068">
    <property type="entry name" value="MDH"/>
    <property type="match status" value="1"/>
</dbReference>
<gene>
    <name evidence="1" type="primary">mdh</name>
    <name type="ordered locus">VS_0358</name>
</gene>
<accession>B7VID0</accession>
<protein>
    <recommendedName>
        <fullName evidence="1">Malate dehydrogenase</fullName>
        <ecNumber evidence="1">1.1.1.37</ecNumber>
    </recommendedName>
</protein>
<keyword id="KW-0520">NAD</keyword>
<keyword id="KW-0560">Oxidoreductase</keyword>
<keyword id="KW-0816">Tricarboxylic acid cycle</keyword>
<proteinExistence type="inferred from homology"/>
<name>MDH_VIBA3</name>
<feature type="chain" id="PRO_1000185081" description="Malate dehydrogenase">
    <location>
        <begin position="1"/>
        <end position="311"/>
    </location>
</feature>
<feature type="active site" description="Proton acceptor" evidence="1">
    <location>
        <position position="177"/>
    </location>
</feature>
<feature type="binding site" evidence="1">
    <location>
        <begin position="7"/>
        <end position="13"/>
    </location>
    <ligand>
        <name>NAD(+)</name>
        <dbReference type="ChEBI" id="CHEBI:57540"/>
    </ligand>
</feature>
<feature type="binding site" evidence="1">
    <location>
        <position position="34"/>
    </location>
    <ligand>
        <name>NAD(+)</name>
        <dbReference type="ChEBI" id="CHEBI:57540"/>
    </ligand>
</feature>
<feature type="binding site" evidence="1">
    <location>
        <position position="81"/>
    </location>
    <ligand>
        <name>substrate</name>
    </ligand>
</feature>
<feature type="binding site" evidence="1">
    <location>
        <position position="87"/>
    </location>
    <ligand>
        <name>substrate</name>
    </ligand>
</feature>
<feature type="binding site" evidence="1">
    <location>
        <position position="94"/>
    </location>
    <ligand>
        <name>NAD(+)</name>
        <dbReference type="ChEBI" id="CHEBI:57540"/>
    </ligand>
</feature>
<feature type="binding site" evidence="1">
    <location>
        <begin position="117"/>
        <end position="119"/>
    </location>
    <ligand>
        <name>NAD(+)</name>
        <dbReference type="ChEBI" id="CHEBI:57540"/>
    </ligand>
</feature>
<feature type="binding site" evidence="1">
    <location>
        <position position="119"/>
    </location>
    <ligand>
        <name>substrate</name>
    </ligand>
</feature>
<feature type="binding site" evidence="1">
    <location>
        <position position="153"/>
    </location>
    <ligand>
        <name>substrate</name>
    </ligand>
</feature>
<feature type="binding site" evidence="1">
    <location>
        <position position="227"/>
    </location>
    <ligand>
        <name>NAD(+)</name>
        <dbReference type="ChEBI" id="CHEBI:57540"/>
    </ligand>
</feature>
<evidence type="ECO:0000255" key="1">
    <source>
        <dbReference type="HAMAP-Rule" id="MF_01516"/>
    </source>
</evidence>
<organism>
    <name type="scientific">Vibrio atlanticus (strain LGP32)</name>
    <name type="common">Vibrio splendidus (strain Mel32)</name>
    <dbReference type="NCBI Taxonomy" id="575788"/>
    <lineage>
        <taxon>Bacteria</taxon>
        <taxon>Pseudomonadati</taxon>
        <taxon>Pseudomonadota</taxon>
        <taxon>Gammaproteobacteria</taxon>
        <taxon>Vibrionales</taxon>
        <taxon>Vibrionaceae</taxon>
        <taxon>Vibrio</taxon>
    </lineage>
</organism>
<comment type="function">
    <text evidence="1">Catalyzes the reversible oxidation of malate to oxaloacetate.</text>
</comment>
<comment type="catalytic activity">
    <reaction evidence="1">
        <text>(S)-malate + NAD(+) = oxaloacetate + NADH + H(+)</text>
        <dbReference type="Rhea" id="RHEA:21432"/>
        <dbReference type="ChEBI" id="CHEBI:15378"/>
        <dbReference type="ChEBI" id="CHEBI:15589"/>
        <dbReference type="ChEBI" id="CHEBI:16452"/>
        <dbReference type="ChEBI" id="CHEBI:57540"/>
        <dbReference type="ChEBI" id="CHEBI:57945"/>
        <dbReference type="EC" id="1.1.1.37"/>
    </reaction>
</comment>
<comment type="subunit">
    <text evidence="1">Homodimer.</text>
</comment>
<comment type="similarity">
    <text evidence="1">Belongs to the LDH/MDH superfamily. MDH type 1 family.</text>
</comment>
<sequence>MKVAVIGAAGGIGQALALLLKNRLPAGSDLALYDIAPVTPGVAADLSHIPTPVSIKGYAGEDPTPALEGADVVLISAGVARKPGMDRADLFNVNAGIVKSLAEKIAVTCPTACVGIITNPVNTTVPIAAEVLKKAGVYDKRRLFGITTLDVIRSETFVAELKDKDPGDIRVPVIGGHSGVTILPLLSQVEGVEFTDEEIAALTTRIQNAGTEVVEAKAGGGSATLSMGQAACRFGLALVKALQGEENVIECAYVEGEGEHAPFFAQPVKLGKEGAEAILSYGELSDFERNALDSMLETLNGDIEIGVEFAK</sequence>
<reference key="1">
    <citation type="submission" date="2009-02" db="EMBL/GenBank/DDBJ databases">
        <title>Vibrio splendidus str. LGP32 complete genome.</title>
        <authorList>
            <person name="Mazel D."/>
            <person name="Le Roux F."/>
        </authorList>
    </citation>
    <scope>NUCLEOTIDE SEQUENCE [LARGE SCALE GENOMIC DNA]</scope>
    <source>
        <strain>LGP32</strain>
    </source>
</reference>